<sequence>MKITFLGHAAFLVEEEGLKFLFDPFLTGNPQAKIRPDEITADYILVSHGHGDHLGDTVAIAQRSGATVIGVFELCNFLSRQNVKTHPMHIGGRYNFGQFTVKLTPAWHGSSFGEGPVEYLGNPCGFLLSVGGKTLYHTGDTGLFYDMKLLAEIDPVDILLVPIGGNFTMDVKDALKALELVKPKYAIPMHYNTWPVIAADVGEFQDKGRALGVAIKVLNPGEMVVL</sequence>
<gene>
    <name type="ordered locus">CHY_0920</name>
</gene>
<feature type="chain" id="PRO_1000013501" description="UPF0173 metal-dependent hydrolase CHY_0920">
    <location>
        <begin position="1"/>
        <end position="226"/>
    </location>
</feature>
<protein>
    <recommendedName>
        <fullName evidence="1">UPF0173 metal-dependent hydrolase CHY_0920</fullName>
    </recommendedName>
</protein>
<reference key="1">
    <citation type="journal article" date="2005" name="PLoS Genet.">
        <title>Life in hot carbon monoxide: the complete genome sequence of Carboxydothermus hydrogenoformans Z-2901.</title>
        <authorList>
            <person name="Wu M."/>
            <person name="Ren Q."/>
            <person name="Durkin A.S."/>
            <person name="Daugherty S.C."/>
            <person name="Brinkac L.M."/>
            <person name="Dodson R.J."/>
            <person name="Madupu R."/>
            <person name="Sullivan S.A."/>
            <person name="Kolonay J.F."/>
            <person name="Nelson W.C."/>
            <person name="Tallon L.J."/>
            <person name="Jones K.M."/>
            <person name="Ulrich L.E."/>
            <person name="Gonzalez J.M."/>
            <person name="Zhulin I.B."/>
            <person name="Robb F.T."/>
            <person name="Eisen J.A."/>
        </authorList>
    </citation>
    <scope>NUCLEOTIDE SEQUENCE [LARGE SCALE GENOMIC DNA]</scope>
    <source>
        <strain>ATCC BAA-161 / DSM 6008 / Z-2901</strain>
    </source>
</reference>
<name>Y920_CARHZ</name>
<evidence type="ECO:0000255" key="1">
    <source>
        <dbReference type="HAMAP-Rule" id="MF_00457"/>
    </source>
</evidence>
<comment type="similarity">
    <text evidence="1">Belongs to the UPF0173 family.</text>
</comment>
<accession>Q3ADL7</accession>
<proteinExistence type="inferred from homology"/>
<dbReference type="EMBL" id="CP000141">
    <property type="protein sequence ID" value="ABB13665.1"/>
    <property type="molecule type" value="Genomic_DNA"/>
</dbReference>
<dbReference type="RefSeq" id="WP_011343843.1">
    <property type="nucleotide sequence ID" value="NC_007503.1"/>
</dbReference>
<dbReference type="SMR" id="Q3ADL7"/>
<dbReference type="FunCoup" id="Q3ADL7">
    <property type="interactions" value="31"/>
</dbReference>
<dbReference type="STRING" id="246194.CHY_0920"/>
<dbReference type="KEGG" id="chy:CHY_0920"/>
<dbReference type="eggNOG" id="COG2220">
    <property type="taxonomic scope" value="Bacteria"/>
</dbReference>
<dbReference type="HOGENOM" id="CLU_070010_4_0_9"/>
<dbReference type="InParanoid" id="Q3ADL7"/>
<dbReference type="OrthoDB" id="9789133at2"/>
<dbReference type="Proteomes" id="UP000002706">
    <property type="component" value="Chromosome"/>
</dbReference>
<dbReference type="GO" id="GO:0016787">
    <property type="term" value="F:hydrolase activity"/>
    <property type="evidence" value="ECO:0007669"/>
    <property type="project" value="UniProtKB-UniRule"/>
</dbReference>
<dbReference type="Gene3D" id="3.60.15.10">
    <property type="entry name" value="Ribonuclease Z/Hydroxyacylglutathione hydrolase-like"/>
    <property type="match status" value="1"/>
</dbReference>
<dbReference type="HAMAP" id="MF_00457">
    <property type="entry name" value="UPF0173"/>
    <property type="match status" value="1"/>
</dbReference>
<dbReference type="InterPro" id="IPR001279">
    <property type="entry name" value="Metallo-B-lactamas"/>
</dbReference>
<dbReference type="InterPro" id="IPR036866">
    <property type="entry name" value="RibonucZ/Hydroxyglut_hydro"/>
</dbReference>
<dbReference type="InterPro" id="IPR022877">
    <property type="entry name" value="UPF0173"/>
</dbReference>
<dbReference type="InterPro" id="IPR050114">
    <property type="entry name" value="UPF0173_UPF0282_UlaG_hydrolase"/>
</dbReference>
<dbReference type="NCBIfam" id="NF001911">
    <property type="entry name" value="PRK00685.1"/>
    <property type="match status" value="1"/>
</dbReference>
<dbReference type="PANTHER" id="PTHR43546:SF3">
    <property type="entry name" value="UPF0173 METAL-DEPENDENT HYDROLASE MJ1163"/>
    <property type="match status" value="1"/>
</dbReference>
<dbReference type="PANTHER" id="PTHR43546">
    <property type="entry name" value="UPF0173 METAL-DEPENDENT HYDROLASE MJ1163-RELATED"/>
    <property type="match status" value="1"/>
</dbReference>
<dbReference type="Pfam" id="PF13483">
    <property type="entry name" value="Lactamase_B_3"/>
    <property type="match status" value="1"/>
</dbReference>
<dbReference type="SMART" id="SM00849">
    <property type="entry name" value="Lactamase_B"/>
    <property type="match status" value="1"/>
</dbReference>
<dbReference type="SUPFAM" id="SSF56281">
    <property type="entry name" value="Metallo-hydrolase/oxidoreductase"/>
    <property type="match status" value="1"/>
</dbReference>
<keyword id="KW-0378">Hydrolase</keyword>
<keyword id="KW-1185">Reference proteome</keyword>
<organism>
    <name type="scientific">Carboxydothermus hydrogenoformans (strain ATCC BAA-161 / DSM 6008 / Z-2901)</name>
    <dbReference type="NCBI Taxonomy" id="246194"/>
    <lineage>
        <taxon>Bacteria</taxon>
        <taxon>Bacillati</taxon>
        <taxon>Bacillota</taxon>
        <taxon>Clostridia</taxon>
        <taxon>Thermoanaerobacterales</taxon>
        <taxon>Thermoanaerobacteraceae</taxon>
        <taxon>Carboxydothermus</taxon>
    </lineage>
</organism>